<sequence>MDAQSKEVDALVQKITGLHAAIAKLPSLSPSPDVDALFTDLVTACVPPSPVDVTKLAPEAQAMREGLIRLCSEAEGKLEAHYSDMLAAFDNPLDHLGVFPYYSNYINLSKLEYELLARYVPGGIAPARVAFIGSGPLPFSSYVLAARHLPDTVFDNYVPVRAANDRATRLFRADKDVGARMSFHTADVADLTDELATYDVVFLAALVGMAAEDKGQGDPHLGAHMADGAALVRSAHGARGFLYPIVDPQDIGRGGFEVLAVCHPDDDVVNSVIIAQKSKDMFANGPRNGCGGRYARGTVPVVSPPCRFGEMVADVTQKREEFAKAEVAF</sequence>
<gene>
    <name type="primary">NAS7</name>
</gene>
<proteinExistence type="evidence at transcript level"/>
<name>NAS7_HORVU</name>
<keyword id="KW-0949">S-adenosyl-L-methionine</keyword>
<keyword id="KW-0808">Transferase</keyword>
<comment type="function">
    <text evidence="1">Synthesizes nicotianamine, a polyamine that is the first intermediate in the synthesis of the phytosiderophores of the mugineic acid type found in gramineae which serves as a sensor for the physiological iron status within the plant, and/or might be involved in the transport of iron.</text>
</comment>
<comment type="catalytic activity">
    <reaction>
        <text>3 S-adenosyl-L-methionine = nicotianamine + 3 S-methyl-5'-thioadenosine + 3 H(+)</text>
        <dbReference type="Rhea" id="RHEA:16481"/>
        <dbReference type="ChEBI" id="CHEBI:15378"/>
        <dbReference type="ChEBI" id="CHEBI:17509"/>
        <dbReference type="ChEBI" id="CHEBI:58249"/>
        <dbReference type="ChEBI" id="CHEBI:59789"/>
        <dbReference type="EC" id="2.5.1.43"/>
    </reaction>
</comment>
<comment type="similarity">
    <text evidence="2">Belongs to the nicotianamine synthase (NAS)-like family.</text>
</comment>
<evidence type="ECO:0000250" key="1"/>
<evidence type="ECO:0000305" key="2"/>
<accession>Q9ZWH8</accession>
<reference key="1">
    <citation type="submission" date="1998-11" db="EMBL/GenBank/DDBJ databases">
        <authorList>
            <person name="Mori S."/>
            <person name="Higuchi K."/>
        </authorList>
    </citation>
    <scope>NUCLEOTIDE SEQUENCE [MRNA]</scope>
    <source>
        <strain>cv. Ehimehadaka No.1</strain>
        <tissue>Root</tissue>
    </source>
</reference>
<protein>
    <recommendedName>
        <fullName>Probable nicotianamine synthase 7</fullName>
        <ecNumber>2.5.1.43</ecNumber>
    </recommendedName>
    <alternativeName>
        <fullName>HvNAS7</fullName>
    </alternativeName>
    <alternativeName>
        <fullName>S-adenosyl-L-methionine:S-adenosyl-L-methionine:S-adenosyl-methionine 3-amino-3-carboxypropyltransferase 7</fullName>
    </alternativeName>
</protein>
<organism>
    <name type="scientific">Hordeum vulgare</name>
    <name type="common">Barley</name>
    <dbReference type="NCBI Taxonomy" id="4513"/>
    <lineage>
        <taxon>Eukaryota</taxon>
        <taxon>Viridiplantae</taxon>
        <taxon>Streptophyta</taxon>
        <taxon>Embryophyta</taxon>
        <taxon>Tracheophyta</taxon>
        <taxon>Spermatophyta</taxon>
        <taxon>Magnoliopsida</taxon>
        <taxon>Liliopsida</taxon>
        <taxon>Poales</taxon>
        <taxon>Poaceae</taxon>
        <taxon>BOP clade</taxon>
        <taxon>Pooideae</taxon>
        <taxon>Triticodae</taxon>
        <taxon>Triticeae</taxon>
        <taxon>Hordeinae</taxon>
        <taxon>Hordeum</taxon>
    </lineage>
</organism>
<feature type="chain" id="PRO_0000212710" description="Probable nicotianamine synthase 7">
    <location>
        <begin position="1"/>
        <end position="329"/>
    </location>
</feature>
<dbReference type="EC" id="2.5.1.43"/>
<dbReference type="EMBL" id="AB019525">
    <property type="protein sequence ID" value="BAA74587.1"/>
    <property type="molecule type" value="mRNA"/>
</dbReference>
<dbReference type="SMR" id="Q9ZWH8"/>
<dbReference type="ExpressionAtlas" id="Q9ZWH8">
    <property type="expression patterns" value="differential"/>
</dbReference>
<dbReference type="GO" id="GO:0030410">
    <property type="term" value="F:nicotianamine synthase activity"/>
    <property type="evidence" value="ECO:0007669"/>
    <property type="project" value="UniProtKB-EC"/>
</dbReference>
<dbReference type="GO" id="GO:0030418">
    <property type="term" value="P:nicotianamine biosynthetic process"/>
    <property type="evidence" value="ECO:0007669"/>
    <property type="project" value="InterPro"/>
</dbReference>
<dbReference type="Gene3D" id="3.40.50.150">
    <property type="entry name" value="Vaccinia Virus protein VP39"/>
    <property type="match status" value="1"/>
</dbReference>
<dbReference type="InterPro" id="IPR004298">
    <property type="entry name" value="Nicotian_synth"/>
</dbReference>
<dbReference type="InterPro" id="IPR029063">
    <property type="entry name" value="SAM-dependent_MTases_sf"/>
</dbReference>
<dbReference type="PANTHER" id="PTHR32266:SF20">
    <property type="entry name" value="NICOTIANAMINE SYNTHASE"/>
    <property type="match status" value="1"/>
</dbReference>
<dbReference type="PANTHER" id="PTHR32266">
    <property type="entry name" value="NICOTIANAMINE SYNTHASE 3"/>
    <property type="match status" value="1"/>
</dbReference>
<dbReference type="Pfam" id="PF03059">
    <property type="entry name" value="NAS"/>
    <property type="match status" value="1"/>
</dbReference>
<dbReference type="PROSITE" id="PS51142">
    <property type="entry name" value="NAS"/>
    <property type="match status" value="1"/>
</dbReference>